<keyword id="KW-0050">Antiport</keyword>
<keyword id="KW-0333">Golgi apparatus</keyword>
<keyword id="KW-0472">Membrane</keyword>
<keyword id="KW-1185">Reference proteome</keyword>
<keyword id="KW-0762">Sugar transport</keyword>
<keyword id="KW-0812">Transmembrane</keyword>
<keyword id="KW-1133">Transmembrane helix</keyword>
<keyword id="KW-0813">Transport</keyword>
<evidence type="ECO:0000250" key="1">
    <source>
        <dbReference type="UniProtKB" id="P78381"/>
    </source>
</evidence>
<evidence type="ECO:0000255" key="2"/>
<evidence type="ECO:0000256" key="3">
    <source>
        <dbReference type="SAM" id="MobiDB-lite"/>
    </source>
</evidence>
<evidence type="ECO:0000305" key="4"/>
<comment type="function">
    <text evidence="1">Transports uridine diphosphate galactose (UDP-galactose) from the cytosol into the Golgi apparatus, functioning as an antiporter that exchanges UDP-galactose for UMP. It is also able to exchange UDP-galactose for AMP and CMP, and to transport UDP-N-acetylgalactosamine (UDP-GalNAc) and other nucleotide sugars. As a provider of UDP-galactose to galactosyltransferases present in the Golgi apparatus, it is necessary for globotriaosylceramide/globoside (Gb3Cer) synthesis from lactosylceramide.</text>
</comment>
<comment type="catalytic activity">
    <reaction evidence="1">
        <text>UMP(out) + UDP-alpha-D-galactose(in) = UMP(in) + UDP-alpha-D-galactose(out)</text>
        <dbReference type="Rhea" id="RHEA:72703"/>
        <dbReference type="ChEBI" id="CHEBI:57865"/>
        <dbReference type="ChEBI" id="CHEBI:66914"/>
    </reaction>
</comment>
<comment type="catalytic activity">
    <reaction evidence="1">
        <text>UDP-N-acetyl-alpha-D-galactosamine(in) + UMP(out) = UDP-N-acetyl-alpha-D-galactosamine(out) + UMP(in)</text>
        <dbReference type="Rhea" id="RHEA:72735"/>
        <dbReference type="ChEBI" id="CHEBI:57865"/>
        <dbReference type="ChEBI" id="CHEBI:67138"/>
    </reaction>
</comment>
<comment type="catalytic activity">
    <reaction evidence="1">
        <text>UMP(out) + UDP-alpha-D-glucose(in) = UMP(in) + UDP-alpha-D-glucose(out)</text>
        <dbReference type="Rhea" id="RHEA:72731"/>
        <dbReference type="ChEBI" id="CHEBI:57865"/>
        <dbReference type="ChEBI" id="CHEBI:58885"/>
    </reaction>
</comment>
<comment type="catalytic activity">
    <reaction evidence="1">
        <text>UMP(out) + UDP-N-acetyl-alpha-D-glucosamine(in) = UMP(in) + UDP-N-acetyl-alpha-D-glucosamine(out)</text>
        <dbReference type="Rhea" id="RHEA:72695"/>
        <dbReference type="ChEBI" id="CHEBI:57705"/>
        <dbReference type="ChEBI" id="CHEBI:57865"/>
    </reaction>
</comment>
<comment type="catalytic activity">
    <reaction evidence="1">
        <text>UDP-alpha-D-galactose(in) + AMP(out) = UDP-alpha-D-galactose(out) + AMP(in)</text>
        <dbReference type="Rhea" id="RHEA:74599"/>
        <dbReference type="ChEBI" id="CHEBI:66914"/>
        <dbReference type="ChEBI" id="CHEBI:456215"/>
    </reaction>
</comment>
<comment type="catalytic activity">
    <reaction evidence="1">
        <text>UDP-alpha-D-galactose(in) + CMP(out) = UDP-alpha-D-galactose(out) + CMP(in)</text>
        <dbReference type="Rhea" id="RHEA:74603"/>
        <dbReference type="ChEBI" id="CHEBI:60377"/>
        <dbReference type="ChEBI" id="CHEBI:66914"/>
    </reaction>
</comment>
<comment type="catalytic activity">
    <reaction evidence="1">
        <text>UDP-N-acetyl-alpha-D-galactosamine(out) + UDP-alpha-D-galactose(in) = UDP-N-acetyl-alpha-D-galactosamine(in) + UDP-alpha-D-galactose(out)</text>
        <dbReference type="Rhea" id="RHEA:74607"/>
        <dbReference type="ChEBI" id="CHEBI:66914"/>
        <dbReference type="ChEBI" id="CHEBI:67138"/>
    </reaction>
</comment>
<comment type="catalytic activity">
    <reaction evidence="1">
        <text>UDP-N-acetyl-alpha-D-glucosamine(out) + UDP-alpha-D-galactose(in) = UDP-N-acetyl-alpha-D-glucosamine(in) + UDP-alpha-D-galactose(out)</text>
        <dbReference type="Rhea" id="RHEA:74611"/>
        <dbReference type="ChEBI" id="CHEBI:57705"/>
        <dbReference type="ChEBI" id="CHEBI:66914"/>
    </reaction>
</comment>
<comment type="catalytic activity">
    <reaction evidence="1">
        <text>UDP-alpha-D-galactose(in) + UDP-alpha-D-glucose(out) = UDP-alpha-D-galactose(out) + UDP-alpha-D-glucose(in)</text>
        <dbReference type="Rhea" id="RHEA:74615"/>
        <dbReference type="ChEBI" id="CHEBI:58885"/>
        <dbReference type="ChEBI" id="CHEBI:66914"/>
    </reaction>
</comment>
<comment type="catalytic activity">
    <reaction evidence="1">
        <text>UMP(out) + CMP(in) = UMP(in) + CMP(out)</text>
        <dbReference type="Rhea" id="RHEA:74619"/>
        <dbReference type="ChEBI" id="CHEBI:57865"/>
        <dbReference type="ChEBI" id="CHEBI:60377"/>
    </reaction>
</comment>
<comment type="catalytic activity">
    <reaction evidence="1">
        <text>UMP(out) + AMP(in) = UMP(in) + AMP(out)</text>
        <dbReference type="Rhea" id="RHEA:74623"/>
        <dbReference type="ChEBI" id="CHEBI:57865"/>
        <dbReference type="ChEBI" id="CHEBI:456215"/>
    </reaction>
</comment>
<comment type="subunit">
    <text evidence="1">Interacts with SLC35A3; the interaction is reduced in the presence of SLC35A4 (By similarity). Found in a complex with SLC35A3 and SLC35A4 (By similarity).</text>
</comment>
<comment type="subcellular location">
    <subcellularLocation>
        <location evidence="1">Golgi apparatus membrane</location>
        <topology evidence="2">Multi-pass membrane protein</topology>
    </subcellularLocation>
</comment>
<comment type="similarity">
    <text evidence="4">Belongs to the nucleotide-sugar transporter family. SLC35A subfamily.</text>
</comment>
<name>S35A2_CANLF</name>
<organism>
    <name type="scientific">Canis lupus familiaris</name>
    <name type="common">Dog</name>
    <name type="synonym">Canis familiaris</name>
    <dbReference type="NCBI Taxonomy" id="9615"/>
    <lineage>
        <taxon>Eukaryota</taxon>
        <taxon>Metazoa</taxon>
        <taxon>Chordata</taxon>
        <taxon>Craniata</taxon>
        <taxon>Vertebrata</taxon>
        <taxon>Euteleostomi</taxon>
        <taxon>Mammalia</taxon>
        <taxon>Eutheria</taxon>
        <taxon>Laurasiatheria</taxon>
        <taxon>Carnivora</taxon>
        <taxon>Caniformia</taxon>
        <taxon>Canidae</taxon>
        <taxon>Canis</taxon>
    </lineage>
</organism>
<dbReference type="EMBL" id="AY064406">
    <property type="protein sequence ID" value="AAL62489.2"/>
    <property type="molecule type" value="mRNA"/>
</dbReference>
<dbReference type="RefSeq" id="NP_001003059.2">
    <property type="nucleotide sequence ID" value="NM_001003059.2"/>
</dbReference>
<dbReference type="SMR" id="Q8WMS0"/>
<dbReference type="FunCoup" id="Q8WMS0">
    <property type="interactions" value="185"/>
</dbReference>
<dbReference type="STRING" id="9615.ENSCAFP00000060247"/>
<dbReference type="PaxDb" id="9612-ENSCAFP00000023037"/>
<dbReference type="GeneID" id="403595"/>
<dbReference type="KEGG" id="cfa:403595"/>
<dbReference type="CTD" id="7355"/>
<dbReference type="eggNOG" id="KOG2234">
    <property type="taxonomic scope" value="Eukaryota"/>
</dbReference>
<dbReference type="InParanoid" id="Q8WMS0"/>
<dbReference type="OrthoDB" id="408493at2759"/>
<dbReference type="Proteomes" id="UP000002254">
    <property type="component" value="Unplaced"/>
</dbReference>
<dbReference type="Proteomes" id="UP000694429">
    <property type="component" value="Unplaced"/>
</dbReference>
<dbReference type="Proteomes" id="UP000694542">
    <property type="component" value="Unplaced"/>
</dbReference>
<dbReference type="Proteomes" id="UP000805418">
    <property type="component" value="Unplaced"/>
</dbReference>
<dbReference type="GO" id="GO:0000139">
    <property type="term" value="C:Golgi membrane"/>
    <property type="evidence" value="ECO:0000250"/>
    <property type="project" value="UniProtKB"/>
</dbReference>
<dbReference type="GO" id="GO:0015297">
    <property type="term" value="F:antiporter activity"/>
    <property type="evidence" value="ECO:0007669"/>
    <property type="project" value="UniProtKB-KW"/>
</dbReference>
<dbReference type="GO" id="GO:0005459">
    <property type="term" value="F:UDP-galactose transmembrane transporter activity"/>
    <property type="evidence" value="ECO:0000318"/>
    <property type="project" value="GO_Central"/>
</dbReference>
<dbReference type="GO" id="GO:0072334">
    <property type="term" value="P:UDP-galactose transmembrane transport"/>
    <property type="evidence" value="ECO:0000318"/>
    <property type="project" value="GO_Central"/>
</dbReference>
<dbReference type="FunFam" id="1.10.3730.20:FF:000037">
    <property type="entry name" value="Nucleotide Sugar TransPorter family"/>
    <property type="match status" value="1"/>
</dbReference>
<dbReference type="InterPro" id="IPR007271">
    <property type="entry name" value="Nuc_sug_transpt"/>
</dbReference>
<dbReference type="NCBIfam" id="TIGR00803">
    <property type="entry name" value="nst"/>
    <property type="match status" value="1"/>
</dbReference>
<dbReference type="PANTHER" id="PTHR10231">
    <property type="entry name" value="NUCLEOTIDE-SUGAR TRANSMEMBRANE TRANSPORTER"/>
    <property type="match status" value="1"/>
</dbReference>
<dbReference type="Pfam" id="PF04142">
    <property type="entry name" value="Nuc_sug_transp"/>
    <property type="match status" value="1"/>
</dbReference>
<dbReference type="PIRSF" id="PIRSF005799">
    <property type="entry name" value="UDP-gal_transpt"/>
    <property type="match status" value="1"/>
</dbReference>
<dbReference type="SUPFAM" id="SSF103481">
    <property type="entry name" value="Multidrug resistance efflux transporter EmrE"/>
    <property type="match status" value="1"/>
</dbReference>
<gene>
    <name evidence="1" type="primary">SLC35A2</name>
    <name type="synonym">UGT</name>
</gene>
<reference key="1">
    <citation type="submission" date="2005-06" db="EMBL/GenBank/DDBJ databases">
        <title>Golgi ORF of UDP-galactose transporter from dog.</title>
        <authorList>
            <person name="Olczak M."/>
            <person name="Guillen E."/>
            <person name="Hirschberg C.B."/>
        </authorList>
    </citation>
    <scope>NUCLEOTIDE SEQUENCE [MRNA]</scope>
</reference>
<accession>Q8WMS0</accession>
<feature type="chain" id="PRO_0000289574" description="UDP-galactose translocator">
    <location>
        <begin position="1"/>
        <end position="397"/>
    </location>
</feature>
<feature type="transmembrane region" description="Helical" evidence="2">
    <location>
        <begin position="3"/>
        <end position="23"/>
    </location>
</feature>
<feature type="transmembrane region" description="Helical" evidence="2">
    <location>
        <begin position="37"/>
        <end position="57"/>
    </location>
</feature>
<feature type="transmembrane region" description="Helical" evidence="2">
    <location>
        <begin position="65"/>
        <end position="85"/>
    </location>
</feature>
<feature type="transmembrane region" description="Helical" evidence="2">
    <location>
        <begin position="97"/>
        <end position="117"/>
    </location>
</feature>
<feature type="transmembrane region" description="Helical" evidence="2">
    <location>
        <begin position="140"/>
        <end position="160"/>
    </location>
</feature>
<feature type="transmembrane region" description="Helical" evidence="2">
    <location>
        <begin position="169"/>
        <end position="189"/>
    </location>
</feature>
<feature type="transmembrane region" description="Helical" evidence="2">
    <location>
        <begin position="200"/>
        <end position="220"/>
    </location>
</feature>
<feature type="transmembrane region" description="Helical" evidence="2">
    <location>
        <begin position="238"/>
        <end position="258"/>
    </location>
</feature>
<feature type="transmembrane region" description="Helical" evidence="2">
    <location>
        <begin position="269"/>
        <end position="289"/>
    </location>
</feature>
<feature type="transmembrane region" description="Helical" evidence="2">
    <location>
        <begin position="315"/>
        <end position="335"/>
    </location>
</feature>
<feature type="region of interest" description="Disordered" evidence="3">
    <location>
        <begin position="1"/>
        <end position="21"/>
    </location>
</feature>
<feature type="region of interest" description="Disordered" evidence="3">
    <location>
        <begin position="355"/>
        <end position="397"/>
    </location>
</feature>
<feature type="compositionally biased region" description="Low complexity" evidence="3">
    <location>
        <begin position="9"/>
        <end position="21"/>
    </location>
</feature>
<sequence>MAAVGSGGSNAAAGPGAVSAGSLEPGTASAAHRRLKYISLAVLVVQNASLILSIRYARTLPGDRFFATTAVVMAEVLKGLTCLLLLFAQKRGNVKHLALFLHEAVLVQYVDTLKLAVPSLIYTLQNNLQYVAISNMPAATFQVTYQLKILTTALFSVLMLNRSLSRLQWASLLLLFTGVAIVQAQQAGGGGPRPLDQNPGAGLAAVVASCLSSGFAGVYFEKILKGSSGSVWLRNLQLGLFGTALGLVGLWWAEGTAVARRGFFFGYTPAVWGVVLNQAFGGLLVAVVVKYADNILKGFATSLSIVLSTVASIRLFGFHVDPLFALGAGLVIGAVYLYSLPRGTAKAIASTSASASASTSGPCTHQQPPGQPPPPKLSSHRADLSTEPFLPKSVLVK</sequence>
<protein>
    <recommendedName>
        <fullName evidence="1">UDP-galactose translocator</fullName>
    </recommendedName>
    <alternativeName>
        <fullName evidence="1">Solute carrier family 35 member A2</fullName>
    </alternativeName>
    <alternativeName>
        <fullName>UDP-galactose transporter</fullName>
        <shortName>UDP-Gal-Tr</shortName>
        <shortName>UGT</shortName>
    </alternativeName>
</protein>
<proteinExistence type="evidence at transcript level"/>